<proteinExistence type="evidence at protein level"/>
<comment type="function">
    <text evidence="5 6 7">Involved in the biosynthesis of germacrene-derived sesquiterpene lactones. Catalyzes three consecutive oxidations of germacrene A to produce germacrene A acid. Could also catalyze the three-step oxidation of non-natural substrate amorphadiene to artemisinic acid. Can use beta-elemene as substrate.</text>
</comment>
<comment type="catalytic activity">
    <reaction evidence="5 6">
        <text>(+)-(R)-germacrene A + 3 reduced [NADPH--hemoprotein reductase] + 3 O2 = germacra-1(10),4,11(13)-trien-12-oate + 3 oxidized [NADPH--hemoprotein reductase] + 4 H2O + 4 H(+)</text>
        <dbReference type="Rhea" id="RHEA:30303"/>
        <dbReference type="Rhea" id="RHEA-COMP:11964"/>
        <dbReference type="Rhea" id="RHEA-COMP:11965"/>
        <dbReference type="ChEBI" id="CHEBI:15377"/>
        <dbReference type="ChEBI" id="CHEBI:15378"/>
        <dbReference type="ChEBI" id="CHEBI:15379"/>
        <dbReference type="ChEBI" id="CHEBI:41595"/>
        <dbReference type="ChEBI" id="CHEBI:57618"/>
        <dbReference type="ChEBI" id="CHEBI:58210"/>
        <dbReference type="ChEBI" id="CHEBI:61301"/>
        <dbReference type="EC" id="1.14.14.95"/>
    </reaction>
    <physiologicalReaction direction="left-to-right" evidence="5 6">
        <dbReference type="Rhea" id="RHEA:30304"/>
    </physiologicalReaction>
</comment>
<comment type="cofactor">
    <cofactor evidence="1">
        <name>heme</name>
        <dbReference type="ChEBI" id="CHEBI:30413"/>
    </cofactor>
</comment>
<comment type="activity regulation">
    <text evidence="5">Inhibited by cytochrome C, miconazole, aminobenzotriazole, metyrapone and clotrimazole.</text>
</comment>
<comment type="biophysicochemical properties">
    <phDependence>
        <text evidence="5">Optimum pH is 8.0.</text>
    </phDependence>
</comment>
<comment type="pathway">
    <text evidence="8">Secondary metabolite biosynthesis; terpenoid biosynthesis.</text>
</comment>
<comment type="subcellular location">
    <subcellularLocation>
        <location evidence="7">Endoplasmic reticulum membrane</location>
        <topology evidence="7">Single-pass type II membrane protein</topology>
    </subcellularLocation>
    <subcellularLocation>
        <location evidence="7">Microsome membrane</location>
        <topology evidence="7">Single-pass type II membrane protein</topology>
    </subcellularLocation>
</comment>
<comment type="similarity">
    <text evidence="9">Belongs to the cytochrome P450 family.</text>
</comment>
<feature type="chain" id="PRO_0000412762" description="Germacrene A hydroxylase">
    <location>
        <begin position="1"/>
        <end position="488"/>
    </location>
</feature>
<feature type="topological domain" description="Cytoplasmic" evidence="3">
    <location>
        <begin position="1"/>
        <end position="6"/>
    </location>
</feature>
<feature type="transmembrane region" description="Helical; Signal-anchor for type II membrane protein" evidence="3">
    <location>
        <begin position="7"/>
        <end position="23"/>
    </location>
</feature>
<feature type="topological domain" description="Lumenal" evidence="3">
    <location>
        <begin position="24"/>
        <end position="488"/>
    </location>
</feature>
<feature type="binding site" description="axial binding residue" evidence="2">
    <location>
        <position position="432"/>
    </location>
    <ligand>
        <name>heme</name>
        <dbReference type="ChEBI" id="CHEBI:30413"/>
    </ligand>
    <ligandPart>
        <name>Fe</name>
        <dbReference type="ChEBI" id="CHEBI:18248"/>
    </ligandPart>
</feature>
<feature type="glycosylation site" description="N-linked (GlcNAc...) asparagine" evidence="4">
    <location>
        <position position="260"/>
    </location>
</feature>
<feature type="glycosylation site" description="N-linked (GlcNAc...) asparagine" evidence="4">
    <location>
        <position position="379"/>
    </location>
</feature>
<protein>
    <recommendedName>
        <fullName>Germacrene A hydroxylase</fullName>
        <ecNumber evidence="5 6">1.14.14.95</ecNumber>
    </recommendedName>
    <alternativeName>
        <fullName>Germacrene A oxidase</fullName>
        <shortName>CiGAO</shortName>
    </alternativeName>
</protein>
<dbReference type="EC" id="1.14.14.95" evidence="5 6"/>
<dbReference type="EMBL" id="GU256644">
    <property type="protein sequence ID" value="ADF43080.1"/>
    <property type="molecule type" value="mRNA"/>
</dbReference>
<dbReference type="SMR" id="D5JBW8"/>
<dbReference type="KEGG" id="ag:ADF43080"/>
<dbReference type="BioCyc" id="MetaCyc:MONOMER-15752"/>
<dbReference type="BRENDA" id="1.14.14.95">
    <property type="organism ID" value="1385"/>
</dbReference>
<dbReference type="UniPathway" id="UPA00213"/>
<dbReference type="GO" id="GO:0005789">
    <property type="term" value="C:endoplasmic reticulum membrane"/>
    <property type="evidence" value="ECO:0007669"/>
    <property type="project" value="UniProtKB-SubCell"/>
</dbReference>
<dbReference type="GO" id="GO:0106223">
    <property type="term" value="F:germacrene A hydroxylase activity"/>
    <property type="evidence" value="ECO:0000314"/>
    <property type="project" value="UniProtKB"/>
</dbReference>
<dbReference type="GO" id="GO:0020037">
    <property type="term" value="F:heme binding"/>
    <property type="evidence" value="ECO:0007669"/>
    <property type="project" value="InterPro"/>
</dbReference>
<dbReference type="GO" id="GO:0005506">
    <property type="term" value="F:iron ion binding"/>
    <property type="evidence" value="ECO:0007669"/>
    <property type="project" value="InterPro"/>
</dbReference>
<dbReference type="GO" id="GO:0051762">
    <property type="term" value="P:sesquiterpene biosynthetic process"/>
    <property type="evidence" value="ECO:0000314"/>
    <property type="project" value="UniProtKB"/>
</dbReference>
<dbReference type="GO" id="GO:0016114">
    <property type="term" value="P:terpenoid biosynthetic process"/>
    <property type="evidence" value="ECO:0007669"/>
    <property type="project" value="UniProtKB-UniPathway"/>
</dbReference>
<dbReference type="CDD" id="cd11072">
    <property type="entry name" value="CYP71-like"/>
    <property type="match status" value="1"/>
</dbReference>
<dbReference type="FunFam" id="1.10.630.10:FF:000043">
    <property type="entry name" value="Cytochrome P450 99A2"/>
    <property type="match status" value="1"/>
</dbReference>
<dbReference type="Gene3D" id="1.10.630.10">
    <property type="entry name" value="Cytochrome P450"/>
    <property type="match status" value="1"/>
</dbReference>
<dbReference type="InterPro" id="IPR001128">
    <property type="entry name" value="Cyt_P450"/>
</dbReference>
<dbReference type="InterPro" id="IPR017972">
    <property type="entry name" value="Cyt_P450_CS"/>
</dbReference>
<dbReference type="InterPro" id="IPR002401">
    <property type="entry name" value="Cyt_P450_E_grp-I"/>
</dbReference>
<dbReference type="InterPro" id="IPR036396">
    <property type="entry name" value="Cyt_P450_sf"/>
</dbReference>
<dbReference type="PANTHER" id="PTHR47955">
    <property type="entry name" value="CYTOCHROME P450 FAMILY 71 PROTEIN"/>
    <property type="match status" value="1"/>
</dbReference>
<dbReference type="PANTHER" id="PTHR47955:SF9">
    <property type="entry name" value="PREMNASPIRODIENE OXYGENASE-LIKE"/>
    <property type="match status" value="1"/>
</dbReference>
<dbReference type="Pfam" id="PF00067">
    <property type="entry name" value="p450"/>
    <property type="match status" value="1"/>
</dbReference>
<dbReference type="PRINTS" id="PR00463">
    <property type="entry name" value="EP450I"/>
</dbReference>
<dbReference type="PRINTS" id="PR00385">
    <property type="entry name" value="P450"/>
</dbReference>
<dbReference type="SUPFAM" id="SSF48264">
    <property type="entry name" value="Cytochrome P450"/>
    <property type="match status" value="1"/>
</dbReference>
<dbReference type="PROSITE" id="PS00086">
    <property type="entry name" value="CYTOCHROME_P450"/>
    <property type="match status" value="1"/>
</dbReference>
<keyword id="KW-0256">Endoplasmic reticulum</keyword>
<keyword id="KW-0325">Glycoprotein</keyword>
<keyword id="KW-0349">Heme</keyword>
<keyword id="KW-0408">Iron</keyword>
<keyword id="KW-0472">Membrane</keyword>
<keyword id="KW-0479">Metal-binding</keyword>
<keyword id="KW-0492">Microsome</keyword>
<keyword id="KW-0503">Monooxygenase</keyword>
<keyword id="KW-0560">Oxidoreductase</keyword>
<keyword id="KW-0735">Signal-anchor</keyword>
<keyword id="KW-0812">Transmembrane</keyword>
<keyword id="KW-1133">Transmembrane helix</keyword>
<accession>D5JBW8</accession>
<evidence type="ECO:0000250" key="1"/>
<evidence type="ECO:0000250" key="2">
    <source>
        <dbReference type="UniProtKB" id="P04798"/>
    </source>
</evidence>
<evidence type="ECO:0000255" key="3"/>
<evidence type="ECO:0000255" key="4">
    <source>
        <dbReference type="PROSITE-ProRule" id="PRU00498"/>
    </source>
</evidence>
<evidence type="ECO:0000269" key="5">
    <source>
    </source>
</evidence>
<evidence type="ECO:0000269" key="6">
    <source>
    </source>
</evidence>
<evidence type="ECO:0000269" key="7">
    <source ref="3"/>
</evidence>
<evidence type="ECO:0000303" key="8">
    <source>
    </source>
</evidence>
<evidence type="ECO:0000305" key="9"/>
<name>GAO_CICIN</name>
<sequence>MELSLTTSIALATIVLILYKLATRPKSNKKRLPEASRLPIIGHMHHLIGTMPHRGVMELARKHGSLMHLQLGEVSTIVVSSPKWAKEILTTYDITFANRPETLTGEIIAYHNTDIVLAPYGEYWRQLRKLCTLELLSVKKVKSFQSIREEECWNLVKEVKESGSGKPISLSESIFKMIATILSRAAFGKGIKDQREFTEIVKEILRQTGGFDVADIFPSKKFLHHLSGKRARLTSIHKKLDTLINNIVAEHHVSTSSKANETLLDVLLRLKDSAEFPLTADNVKAIILDMFGAGTDTSSATVEWAISELIRCPRAMEKVQAELRQALNGKEQIHEEDIQDLPYLNLVIRETLRLHPPLPLVMPRECREPVNLAGYEIANKTKLIVNVFAINRDPEYWKDAEAFIPERFENNPNNIMGADYEYLPFGAGRRMCPGAALGLANVQLPLANILYHFNWKLPNGASHDQLDMTESFGATVQRKTELILVPSF</sequence>
<reference key="1">
    <citation type="journal article" date="2010" name="J. Biol. Chem.">
        <title>Biochemical conservation and evolution of germacrene A oxidase in asteraceae.</title>
        <authorList>
            <person name="Nguyen D.T."/>
            <person name="Goepfert J.C."/>
            <person name="Ikezawa N."/>
            <person name="Macnevin G."/>
            <person name="Kathiresan M."/>
            <person name="Conrad J."/>
            <person name="Spring O."/>
            <person name="Ro D.-K."/>
        </authorList>
    </citation>
    <scope>NUCLEOTIDE SEQUENCE [MRNA]</scope>
    <scope>FUNCTION</scope>
    <scope>CATALYTIC ACTIVITY</scope>
</reference>
<reference key="2">
    <citation type="journal article" date="2001" name="Plant Physiol.">
        <title>Biosynthesis of germacrene A carboxylic acid in chicory roots. Demonstration of a cytochrome P450 (+)-germacrene a hydroxylase and NADP+-dependent sesquiterpenoid dehydrogenase(s) involved in sesquiterpene lactone biosynthesis.</title>
        <authorList>
            <person name="de Kraker J.W."/>
            <person name="Franssen M.C."/>
            <person name="Dalm M.C."/>
            <person name="de Groot A."/>
            <person name="Bouwmeester H.J."/>
        </authorList>
    </citation>
    <scope>FUNCTION</scope>
    <scope>CATALYTIC ACTIVITY</scope>
    <scope>BIOPHYSICOCHEMICAL PROPERTIES</scope>
    <scope>ACTIVITY REGULATION</scope>
</reference>
<reference key="3">
    <citation type="journal article" date="2003" name="Tetrahedron">
        <title>Hydroxylation of sesquiterpenes by enzymes from chicory (Cichorium intybus L.) roots.</title>
        <authorList>
            <person name="de Kraker J.W."/>
            <person name="Schurink M."/>
            <person name="Franssen M.C."/>
            <person name="Koenig W.A."/>
            <person name="de Groot A."/>
            <person name="Bouwmeester H.J."/>
        </authorList>
    </citation>
    <scope>FUNCTION</scope>
    <scope>SUBCELLULAR LOCATION</scope>
</reference>
<reference key="4">
    <citation type="journal article" date="2019" name="Nat. Prod. Rep.">
        <title>Non-volatile natural products in plant glandular trichomes: chemistry, biological activities and biosynthesis.</title>
        <authorList>
            <person name="Liu Y."/>
            <person name="Jing S.-X."/>
            <person name="Luo S.-H."/>
            <person name="Li S.-H."/>
        </authorList>
    </citation>
    <scope>PATHWAY</scope>
    <scope>REVIEW</scope>
</reference>
<organism>
    <name type="scientific">Cichorium intybus</name>
    <name type="common">Chicory</name>
    <dbReference type="NCBI Taxonomy" id="13427"/>
    <lineage>
        <taxon>Eukaryota</taxon>
        <taxon>Viridiplantae</taxon>
        <taxon>Streptophyta</taxon>
        <taxon>Embryophyta</taxon>
        <taxon>Tracheophyta</taxon>
        <taxon>Spermatophyta</taxon>
        <taxon>Magnoliopsida</taxon>
        <taxon>eudicotyledons</taxon>
        <taxon>Gunneridae</taxon>
        <taxon>Pentapetalae</taxon>
        <taxon>asterids</taxon>
        <taxon>campanulids</taxon>
        <taxon>Asterales</taxon>
        <taxon>Asteraceae</taxon>
        <taxon>Cichorioideae</taxon>
        <taxon>Cichorieae</taxon>
        <taxon>Cichoriinae</taxon>
        <taxon>Cichorium</taxon>
    </lineage>
</organism>